<accession>B5DGM4</accession>
<name>PUA1C_SALSA</name>
<gene>
    <name type="primary">adss1c</name>
    <name type="synonym">adssl1c</name>
</gene>
<sequence length="459" mass="50826">MSFSWSAKDHKSYTNPPSNPTQGLKRPRNDTGNKVTVVLGAQWGDEGKGKVVDLLATESDLVCRCQGGNNAGHTVVVEGKEYDFHLLPSGIINPKSICVIGNGVVIHLPGLFEEAENNEKKGLKGWEKRLIVSDRAHLVFDFHQVVDGIQETQRQATEGKIIGTTKKGIGPTYASKASRIGLRVCDLLGDFKEFSTKFKNLVEQYQSMYSSLTVDTESQLKKLKEYGERLRPMVRDGVYYMYEALHGPPKKILVEGANAALLDIDFGTYPFVTSSNCTVGGACTGLGIPPLNIGEVYGVSKAYTTRVGIGAFPTEQLNATGELLQTRGHEVGVTTGRKRRCGWLDLVILRYAHMINGFTAIALTKLDILDVLDEIKVGMAYKINGKRIPHFPADMELLHKVEVEYETFPGWKSDTSAARKWNNLPQKAQNYIRFVESHIGVPIKWVGVGKSRECMIQMF</sequence>
<dbReference type="EC" id="6.3.4.4" evidence="2"/>
<dbReference type="EMBL" id="BT043783">
    <property type="protein sequence ID" value="ACH70898.1"/>
    <property type="molecule type" value="mRNA"/>
</dbReference>
<dbReference type="RefSeq" id="NP_001133178.1">
    <property type="nucleotide sequence ID" value="NM_001139706.1"/>
</dbReference>
<dbReference type="SMR" id="B5DGM4"/>
<dbReference type="STRING" id="8030.ENSSSAP00000036910"/>
<dbReference type="PaxDb" id="8030-ENSSSAP00000036910"/>
<dbReference type="Ensembl" id="ENSSSAT00000063751">
    <property type="protein sequence ID" value="ENSSSAP00000037902"/>
    <property type="gene ID" value="ENSSSAG00000015427"/>
</dbReference>
<dbReference type="Ensembl" id="ENSSSAT00070017658">
    <property type="protein sequence ID" value="ENSSSAP00070016737"/>
    <property type="gene ID" value="ENSSSAG00070011204"/>
</dbReference>
<dbReference type="Ensembl" id="ENSSSAT00075023837">
    <property type="protein sequence ID" value="ENSSSAP00075016240"/>
    <property type="gene ID" value="ENSSSAG00075011585"/>
</dbReference>
<dbReference type="GeneID" id="100194621"/>
<dbReference type="KEGG" id="sasa:100194621"/>
<dbReference type="CTD" id="122622"/>
<dbReference type="OrthoDB" id="113485at7898"/>
<dbReference type="UniPathway" id="UPA00075">
    <property type="reaction ID" value="UER00335"/>
</dbReference>
<dbReference type="Proteomes" id="UP000087266">
    <property type="component" value="Chromosome ssa01"/>
</dbReference>
<dbReference type="GO" id="GO:0005737">
    <property type="term" value="C:cytoplasm"/>
    <property type="evidence" value="ECO:0007669"/>
    <property type="project" value="UniProtKB-SubCell"/>
</dbReference>
<dbReference type="GO" id="GO:0004019">
    <property type="term" value="F:adenylosuccinate synthase activity"/>
    <property type="evidence" value="ECO:0007669"/>
    <property type="project" value="UniProtKB-UniRule"/>
</dbReference>
<dbReference type="GO" id="GO:0005525">
    <property type="term" value="F:GTP binding"/>
    <property type="evidence" value="ECO:0007669"/>
    <property type="project" value="UniProtKB-UniRule"/>
</dbReference>
<dbReference type="GO" id="GO:0000287">
    <property type="term" value="F:magnesium ion binding"/>
    <property type="evidence" value="ECO:0007669"/>
    <property type="project" value="UniProtKB-UniRule"/>
</dbReference>
<dbReference type="GO" id="GO:0044208">
    <property type="term" value="P:'de novo' AMP biosynthetic process"/>
    <property type="evidence" value="ECO:0007669"/>
    <property type="project" value="UniProtKB-UniRule"/>
</dbReference>
<dbReference type="GO" id="GO:0046040">
    <property type="term" value="P:IMP metabolic process"/>
    <property type="evidence" value="ECO:0007669"/>
    <property type="project" value="TreeGrafter"/>
</dbReference>
<dbReference type="CDD" id="cd03108">
    <property type="entry name" value="AdSS"/>
    <property type="match status" value="1"/>
</dbReference>
<dbReference type="FunFam" id="3.90.170.10:FF:000001">
    <property type="entry name" value="Adenylosuccinate synthetase"/>
    <property type="match status" value="1"/>
</dbReference>
<dbReference type="FunFam" id="1.10.300.10:FF:000002">
    <property type="entry name" value="Adenylosuccinate synthetase, chloroplastic"/>
    <property type="match status" value="1"/>
</dbReference>
<dbReference type="Gene3D" id="3.40.440.10">
    <property type="entry name" value="Adenylosuccinate Synthetase, subunit A, domain 1"/>
    <property type="match status" value="1"/>
</dbReference>
<dbReference type="Gene3D" id="1.10.300.10">
    <property type="entry name" value="Adenylosuccinate Synthetase, subunit A, domain 2"/>
    <property type="match status" value="1"/>
</dbReference>
<dbReference type="Gene3D" id="3.90.170.10">
    <property type="entry name" value="Adenylosuccinate Synthetase, subunit A, domain 3"/>
    <property type="match status" value="1"/>
</dbReference>
<dbReference type="HAMAP" id="MF_00011">
    <property type="entry name" value="Adenylosucc_synth"/>
    <property type="match status" value="1"/>
</dbReference>
<dbReference type="HAMAP" id="MF_03126">
    <property type="entry name" value="Adenylosucc_synth_vert_basic"/>
    <property type="match status" value="1"/>
</dbReference>
<dbReference type="InterPro" id="IPR018220">
    <property type="entry name" value="Adenylosuccin_syn_GTP-bd"/>
</dbReference>
<dbReference type="InterPro" id="IPR033128">
    <property type="entry name" value="Adenylosuccin_syn_Lys_AS"/>
</dbReference>
<dbReference type="InterPro" id="IPR042109">
    <property type="entry name" value="Adenylosuccinate_synth_dom1"/>
</dbReference>
<dbReference type="InterPro" id="IPR042110">
    <property type="entry name" value="Adenylosuccinate_synth_dom2"/>
</dbReference>
<dbReference type="InterPro" id="IPR042111">
    <property type="entry name" value="Adenylosuccinate_synth_dom3"/>
</dbReference>
<dbReference type="InterPro" id="IPR001114">
    <property type="entry name" value="Adenylosuccinate_synthetase"/>
</dbReference>
<dbReference type="InterPro" id="IPR027509">
    <property type="entry name" value="AdSS_1_vert"/>
</dbReference>
<dbReference type="InterPro" id="IPR027417">
    <property type="entry name" value="P-loop_NTPase"/>
</dbReference>
<dbReference type="NCBIfam" id="NF002223">
    <property type="entry name" value="PRK01117.1"/>
    <property type="match status" value="1"/>
</dbReference>
<dbReference type="NCBIfam" id="TIGR00184">
    <property type="entry name" value="purA"/>
    <property type="match status" value="1"/>
</dbReference>
<dbReference type="PANTHER" id="PTHR11846">
    <property type="entry name" value="ADENYLOSUCCINATE SYNTHETASE"/>
    <property type="match status" value="1"/>
</dbReference>
<dbReference type="PANTHER" id="PTHR11846:SF2">
    <property type="entry name" value="ADENYLOSUCCINATE SYNTHETASE ISOZYME 1"/>
    <property type="match status" value="1"/>
</dbReference>
<dbReference type="Pfam" id="PF00709">
    <property type="entry name" value="Adenylsucc_synt"/>
    <property type="match status" value="1"/>
</dbReference>
<dbReference type="SMART" id="SM00788">
    <property type="entry name" value="Adenylsucc_synt"/>
    <property type="match status" value="1"/>
</dbReference>
<dbReference type="SUPFAM" id="SSF52540">
    <property type="entry name" value="P-loop containing nucleoside triphosphate hydrolases"/>
    <property type="match status" value="1"/>
</dbReference>
<dbReference type="PROSITE" id="PS01266">
    <property type="entry name" value="ADENYLOSUCCIN_SYN_1"/>
    <property type="match status" value="1"/>
</dbReference>
<dbReference type="PROSITE" id="PS00513">
    <property type="entry name" value="ADENYLOSUCCIN_SYN_2"/>
    <property type="match status" value="1"/>
</dbReference>
<evidence type="ECO:0000250" key="1"/>
<evidence type="ECO:0000255" key="2">
    <source>
        <dbReference type="HAMAP-Rule" id="MF_03126"/>
    </source>
</evidence>
<evidence type="ECO:0000256" key="3">
    <source>
        <dbReference type="SAM" id="MobiDB-lite"/>
    </source>
</evidence>
<comment type="function">
    <text evidence="1">Component of the purine nucleotide cycle (PNC), which interconverts IMP and AMP to regulate the nucleotide levels in various tissues, and which contributes to glycolysis and ammoniagenesis. Catalyzes the first committed step in the biosynthesis of AMP from IMP (By similarity).</text>
</comment>
<comment type="catalytic activity">
    <reaction evidence="2">
        <text>IMP + L-aspartate + GTP = N(6)-(1,2-dicarboxyethyl)-AMP + GDP + phosphate + 2 H(+)</text>
        <dbReference type="Rhea" id="RHEA:15753"/>
        <dbReference type="ChEBI" id="CHEBI:15378"/>
        <dbReference type="ChEBI" id="CHEBI:29991"/>
        <dbReference type="ChEBI" id="CHEBI:37565"/>
        <dbReference type="ChEBI" id="CHEBI:43474"/>
        <dbReference type="ChEBI" id="CHEBI:57567"/>
        <dbReference type="ChEBI" id="CHEBI:58053"/>
        <dbReference type="ChEBI" id="CHEBI:58189"/>
        <dbReference type="EC" id="6.3.4.4"/>
    </reaction>
</comment>
<comment type="cofactor">
    <cofactor evidence="2">
        <name>Mg(2+)</name>
        <dbReference type="ChEBI" id="CHEBI:18420"/>
    </cofactor>
    <text evidence="2">Binds 1 Mg(2+) ion per subunit.</text>
</comment>
<comment type="pathway">
    <text evidence="2">Purine metabolism; AMP biosynthesis via de novo pathway; AMP from IMP: step 1/2.</text>
</comment>
<comment type="subunit">
    <text evidence="2">Homodimer.</text>
</comment>
<comment type="subcellular location">
    <subcellularLocation>
        <location evidence="2">Cytoplasm</location>
    </subcellularLocation>
</comment>
<comment type="similarity">
    <text evidence="2">Belongs to the adenylosuccinate synthetase family.</text>
</comment>
<proteinExistence type="evidence at transcript level"/>
<organism>
    <name type="scientific">Salmo salar</name>
    <name type="common">Atlantic salmon</name>
    <dbReference type="NCBI Taxonomy" id="8030"/>
    <lineage>
        <taxon>Eukaryota</taxon>
        <taxon>Metazoa</taxon>
        <taxon>Chordata</taxon>
        <taxon>Craniata</taxon>
        <taxon>Vertebrata</taxon>
        <taxon>Euteleostomi</taxon>
        <taxon>Actinopterygii</taxon>
        <taxon>Neopterygii</taxon>
        <taxon>Teleostei</taxon>
        <taxon>Protacanthopterygii</taxon>
        <taxon>Salmoniformes</taxon>
        <taxon>Salmonidae</taxon>
        <taxon>Salmoninae</taxon>
        <taxon>Salmo</taxon>
    </lineage>
</organism>
<reference key="1">
    <citation type="journal article" date="2009" name="BMC Genomics">
        <title>Characterization of full-length sequenced cDNA inserts (FLIcs) from Atlantic salmon (Salmo salar).</title>
        <authorList>
            <person name="Andreassen R."/>
            <person name="Lunner S."/>
            <person name="Hoyheim B."/>
        </authorList>
    </citation>
    <scope>NUCLEOTIDE SEQUENCE [LARGE SCALE MRNA]</scope>
    <source>
        <tissue>White muscle</tissue>
    </source>
</reference>
<protein>
    <recommendedName>
        <fullName evidence="2">Adenylosuccinate synthetase isozyme 1 C</fullName>
        <shortName evidence="2">AMPSase 1 C</shortName>
        <shortName evidence="2">AdSS 1 C</shortName>
        <ecNumber evidence="2">6.3.4.4</ecNumber>
    </recommendedName>
    <alternativeName>
        <fullName evidence="2">Adenylosuccinate synthetase, basic isozyme C</fullName>
    </alternativeName>
    <alternativeName>
        <fullName evidence="2">Adenylosuccinate synthetase, muscle isozyme C</fullName>
        <shortName evidence="2">M-type adenylosuccinate synthetase C</shortName>
    </alternativeName>
    <alternativeName>
        <fullName evidence="2">IMP--aspartate ligase 1 C</fullName>
    </alternativeName>
</protein>
<feature type="chain" id="PRO_0000398890" description="Adenylosuccinate synthetase isozyme 1 C">
    <location>
        <begin position="1"/>
        <end position="459"/>
    </location>
</feature>
<feature type="region of interest" description="Disordered" evidence="3">
    <location>
        <begin position="1"/>
        <end position="31"/>
    </location>
</feature>
<feature type="compositionally biased region" description="Polar residues" evidence="3">
    <location>
        <begin position="13"/>
        <end position="22"/>
    </location>
</feature>
<feature type="active site" description="Proton acceptor" evidence="2">
    <location>
        <position position="45"/>
    </location>
</feature>
<feature type="active site" description="Proton donor" evidence="2">
    <location>
        <position position="73"/>
    </location>
</feature>
<feature type="binding site" evidence="2">
    <location>
        <begin position="44"/>
        <end position="50"/>
    </location>
    <ligand>
        <name>GTP</name>
        <dbReference type="ChEBI" id="CHEBI:37565"/>
    </ligand>
</feature>
<feature type="binding site" description="in other chain" evidence="2">
    <location>
        <begin position="45"/>
        <end position="48"/>
    </location>
    <ligand>
        <name>IMP</name>
        <dbReference type="ChEBI" id="CHEBI:58053"/>
        <note>ligand shared between dimeric partners</note>
    </ligand>
</feature>
<feature type="binding site" evidence="2">
    <location>
        <position position="45"/>
    </location>
    <ligand>
        <name>Mg(2+)</name>
        <dbReference type="ChEBI" id="CHEBI:18420"/>
    </ligand>
</feature>
<feature type="binding site" evidence="2">
    <location>
        <position position="45"/>
    </location>
    <ligand>
        <name>substrate</name>
    </ligand>
</feature>
<feature type="binding site" description="in other chain" evidence="2">
    <location>
        <begin position="70"/>
        <end position="73"/>
    </location>
    <ligand>
        <name>IMP</name>
        <dbReference type="ChEBI" id="CHEBI:58053"/>
        <note>ligand shared between dimeric partners</note>
    </ligand>
</feature>
<feature type="binding site" evidence="2">
    <location>
        <begin position="72"/>
        <end position="74"/>
    </location>
    <ligand>
        <name>GTP</name>
        <dbReference type="ChEBI" id="CHEBI:37565"/>
    </ligand>
</feature>
<feature type="binding site" evidence="2">
    <location>
        <position position="72"/>
    </location>
    <ligand>
        <name>Mg(2+)</name>
        <dbReference type="ChEBI" id="CHEBI:18420"/>
    </ligand>
</feature>
<feature type="binding site" description="in other chain" evidence="2">
    <location>
        <position position="165"/>
    </location>
    <ligand>
        <name>IMP</name>
        <dbReference type="ChEBI" id="CHEBI:58053"/>
        <note>ligand shared between dimeric partners</note>
    </ligand>
</feature>
<feature type="binding site" evidence="2">
    <location>
        <position position="179"/>
    </location>
    <ligand>
        <name>IMP</name>
        <dbReference type="ChEBI" id="CHEBI:58053"/>
        <note>ligand shared between dimeric partners</note>
    </ligand>
</feature>
<feature type="binding site" description="in other chain" evidence="2">
    <location>
        <position position="258"/>
    </location>
    <ligand>
        <name>IMP</name>
        <dbReference type="ChEBI" id="CHEBI:58053"/>
        <note>ligand shared between dimeric partners</note>
    </ligand>
</feature>
<feature type="binding site" description="in other chain" evidence="2">
    <location>
        <position position="273"/>
    </location>
    <ligand>
        <name>IMP</name>
        <dbReference type="ChEBI" id="CHEBI:58053"/>
        <note>ligand shared between dimeric partners</note>
    </ligand>
</feature>
<feature type="binding site" evidence="2">
    <location>
        <begin position="333"/>
        <end position="339"/>
    </location>
    <ligand>
        <name>substrate</name>
    </ligand>
</feature>
<feature type="binding site" description="in other chain" evidence="2">
    <location>
        <position position="337"/>
    </location>
    <ligand>
        <name>IMP</name>
        <dbReference type="ChEBI" id="CHEBI:58053"/>
        <note>ligand shared between dimeric partners</note>
    </ligand>
</feature>
<feature type="binding site" evidence="2">
    <location>
        <position position="339"/>
    </location>
    <ligand>
        <name>GTP</name>
        <dbReference type="ChEBI" id="CHEBI:37565"/>
    </ligand>
</feature>
<feature type="binding site" evidence="2">
    <location>
        <begin position="365"/>
        <end position="367"/>
    </location>
    <ligand>
        <name>GTP</name>
        <dbReference type="ChEBI" id="CHEBI:37565"/>
    </ligand>
</feature>
<feature type="binding site" evidence="2">
    <location>
        <begin position="447"/>
        <end position="450"/>
    </location>
    <ligand>
        <name>GTP</name>
        <dbReference type="ChEBI" id="CHEBI:37565"/>
    </ligand>
</feature>
<keyword id="KW-0963">Cytoplasm</keyword>
<keyword id="KW-0342">GTP-binding</keyword>
<keyword id="KW-0436">Ligase</keyword>
<keyword id="KW-0460">Magnesium</keyword>
<keyword id="KW-0479">Metal-binding</keyword>
<keyword id="KW-0547">Nucleotide-binding</keyword>
<keyword id="KW-0658">Purine biosynthesis</keyword>
<keyword id="KW-1185">Reference proteome</keyword>